<name>THIE_STAA8</name>
<reference key="1">
    <citation type="book" date="2006" name="Gram positive pathogens, 2nd edition">
        <title>The Staphylococcus aureus NCTC 8325 genome.</title>
        <editorList>
            <person name="Fischetti V."/>
            <person name="Novick R."/>
            <person name="Ferretti J."/>
            <person name="Portnoy D."/>
            <person name="Rood J."/>
        </editorList>
        <authorList>
            <person name="Gillaspy A.F."/>
            <person name="Worrell V."/>
            <person name="Orvis J."/>
            <person name="Roe B.A."/>
            <person name="Dyer D.W."/>
            <person name="Iandolo J.J."/>
        </authorList>
    </citation>
    <scope>NUCLEOTIDE SEQUENCE [LARGE SCALE GENOMIC DNA]</scope>
    <source>
        <strain>NCTC 8325 / PS 47</strain>
    </source>
</reference>
<accession>Q2FWG3</accession>
<proteinExistence type="inferred from homology"/>
<dbReference type="EC" id="2.5.1.3" evidence="1"/>
<dbReference type="EMBL" id="CP000253">
    <property type="protein sequence ID" value="ABD31362.1"/>
    <property type="molecule type" value="Genomic_DNA"/>
</dbReference>
<dbReference type="RefSeq" id="WP_000483153.1">
    <property type="nucleotide sequence ID" value="NZ_LS483365.1"/>
</dbReference>
<dbReference type="RefSeq" id="YP_500807.1">
    <property type="nucleotide sequence ID" value="NC_007795.1"/>
</dbReference>
<dbReference type="SMR" id="Q2FWG3"/>
<dbReference type="STRING" id="93061.SAOUHSC_02328"/>
<dbReference type="PaxDb" id="1280-SAXN108_2336"/>
<dbReference type="GeneID" id="3920953"/>
<dbReference type="KEGG" id="sao:SAOUHSC_02328"/>
<dbReference type="PATRIC" id="fig|93061.5.peg.2109"/>
<dbReference type="eggNOG" id="COG0352">
    <property type="taxonomic scope" value="Bacteria"/>
</dbReference>
<dbReference type="HOGENOM" id="CLU_018272_3_2_9"/>
<dbReference type="OrthoDB" id="9812206at2"/>
<dbReference type="UniPathway" id="UPA00060">
    <property type="reaction ID" value="UER00141"/>
</dbReference>
<dbReference type="PRO" id="PR:Q2FWG3"/>
<dbReference type="Proteomes" id="UP000008816">
    <property type="component" value="Chromosome"/>
</dbReference>
<dbReference type="GO" id="GO:0005737">
    <property type="term" value="C:cytoplasm"/>
    <property type="evidence" value="ECO:0000318"/>
    <property type="project" value="GO_Central"/>
</dbReference>
<dbReference type="GO" id="GO:0000287">
    <property type="term" value="F:magnesium ion binding"/>
    <property type="evidence" value="ECO:0007669"/>
    <property type="project" value="UniProtKB-UniRule"/>
</dbReference>
<dbReference type="GO" id="GO:0004789">
    <property type="term" value="F:thiamine-phosphate diphosphorylase activity"/>
    <property type="evidence" value="ECO:0000318"/>
    <property type="project" value="GO_Central"/>
</dbReference>
<dbReference type="GO" id="GO:0009228">
    <property type="term" value="P:thiamine biosynthetic process"/>
    <property type="evidence" value="ECO:0000318"/>
    <property type="project" value="GO_Central"/>
</dbReference>
<dbReference type="GO" id="GO:0009229">
    <property type="term" value="P:thiamine diphosphate biosynthetic process"/>
    <property type="evidence" value="ECO:0007669"/>
    <property type="project" value="UniProtKB-UniRule"/>
</dbReference>
<dbReference type="CDD" id="cd00564">
    <property type="entry name" value="TMP_TenI"/>
    <property type="match status" value="1"/>
</dbReference>
<dbReference type="FunFam" id="3.20.20.70:FF:000096">
    <property type="entry name" value="Thiamine-phosphate synthase"/>
    <property type="match status" value="1"/>
</dbReference>
<dbReference type="Gene3D" id="3.20.20.70">
    <property type="entry name" value="Aldolase class I"/>
    <property type="match status" value="1"/>
</dbReference>
<dbReference type="HAMAP" id="MF_00097">
    <property type="entry name" value="TMP_synthase"/>
    <property type="match status" value="1"/>
</dbReference>
<dbReference type="InterPro" id="IPR013785">
    <property type="entry name" value="Aldolase_TIM"/>
</dbReference>
<dbReference type="InterPro" id="IPR036206">
    <property type="entry name" value="ThiamineP_synth_sf"/>
</dbReference>
<dbReference type="InterPro" id="IPR022998">
    <property type="entry name" value="ThiamineP_synth_TenI"/>
</dbReference>
<dbReference type="InterPro" id="IPR034291">
    <property type="entry name" value="TMP_synthase"/>
</dbReference>
<dbReference type="NCBIfam" id="TIGR00693">
    <property type="entry name" value="thiE"/>
    <property type="match status" value="1"/>
</dbReference>
<dbReference type="PANTHER" id="PTHR20857">
    <property type="entry name" value="THIAMINE-PHOSPHATE PYROPHOSPHORYLASE"/>
    <property type="match status" value="1"/>
</dbReference>
<dbReference type="PANTHER" id="PTHR20857:SF15">
    <property type="entry name" value="THIAMINE-PHOSPHATE SYNTHASE"/>
    <property type="match status" value="1"/>
</dbReference>
<dbReference type="Pfam" id="PF02581">
    <property type="entry name" value="TMP-TENI"/>
    <property type="match status" value="1"/>
</dbReference>
<dbReference type="SUPFAM" id="SSF51391">
    <property type="entry name" value="Thiamin phosphate synthase"/>
    <property type="match status" value="1"/>
</dbReference>
<gene>
    <name evidence="1" type="primary">thiE</name>
    <name type="ordered locus">SAOUHSC_02328</name>
</gene>
<comment type="function">
    <text evidence="1">Condenses 4-methyl-5-(beta-hydroxyethyl)thiazole monophosphate (THZ-P) and 2-methyl-4-amino-5-hydroxymethyl pyrimidine pyrophosphate (HMP-PP) to form thiamine monophosphate (TMP).</text>
</comment>
<comment type="catalytic activity">
    <reaction evidence="1">
        <text>2-[(2R,5Z)-2-carboxy-4-methylthiazol-5(2H)-ylidene]ethyl phosphate + 4-amino-2-methyl-5-(diphosphooxymethyl)pyrimidine + 2 H(+) = thiamine phosphate + CO2 + diphosphate</text>
        <dbReference type="Rhea" id="RHEA:47844"/>
        <dbReference type="ChEBI" id="CHEBI:15378"/>
        <dbReference type="ChEBI" id="CHEBI:16526"/>
        <dbReference type="ChEBI" id="CHEBI:33019"/>
        <dbReference type="ChEBI" id="CHEBI:37575"/>
        <dbReference type="ChEBI" id="CHEBI:57841"/>
        <dbReference type="ChEBI" id="CHEBI:62899"/>
        <dbReference type="EC" id="2.5.1.3"/>
    </reaction>
</comment>
<comment type="catalytic activity">
    <reaction evidence="1">
        <text>2-(2-carboxy-4-methylthiazol-5-yl)ethyl phosphate + 4-amino-2-methyl-5-(diphosphooxymethyl)pyrimidine + 2 H(+) = thiamine phosphate + CO2 + diphosphate</text>
        <dbReference type="Rhea" id="RHEA:47848"/>
        <dbReference type="ChEBI" id="CHEBI:15378"/>
        <dbReference type="ChEBI" id="CHEBI:16526"/>
        <dbReference type="ChEBI" id="CHEBI:33019"/>
        <dbReference type="ChEBI" id="CHEBI:37575"/>
        <dbReference type="ChEBI" id="CHEBI:57841"/>
        <dbReference type="ChEBI" id="CHEBI:62890"/>
        <dbReference type="EC" id="2.5.1.3"/>
    </reaction>
</comment>
<comment type="catalytic activity">
    <reaction evidence="1">
        <text>4-methyl-5-(2-phosphooxyethyl)-thiazole + 4-amino-2-methyl-5-(diphosphooxymethyl)pyrimidine + H(+) = thiamine phosphate + diphosphate</text>
        <dbReference type="Rhea" id="RHEA:22328"/>
        <dbReference type="ChEBI" id="CHEBI:15378"/>
        <dbReference type="ChEBI" id="CHEBI:33019"/>
        <dbReference type="ChEBI" id="CHEBI:37575"/>
        <dbReference type="ChEBI" id="CHEBI:57841"/>
        <dbReference type="ChEBI" id="CHEBI:58296"/>
        <dbReference type="EC" id="2.5.1.3"/>
    </reaction>
</comment>
<comment type="cofactor">
    <cofactor evidence="1">
        <name>Mg(2+)</name>
        <dbReference type="ChEBI" id="CHEBI:18420"/>
    </cofactor>
    <text evidence="1">Binds 1 Mg(2+) ion per subunit.</text>
</comment>
<comment type="pathway">
    <text evidence="1">Cofactor biosynthesis; thiamine diphosphate biosynthesis; thiamine phosphate from 4-amino-2-methyl-5-diphosphomethylpyrimidine and 4-methyl-5-(2-phosphoethyl)-thiazole: step 1/1.</text>
</comment>
<comment type="similarity">
    <text evidence="1">Belongs to the thiamine-phosphate synthase family.</text>
</comment>
<organism>
    <name type="scientific">Staphylococcus aureus (strain NCTC 8325 / PS 47)</name>
    <dbReference type="NCBI Taxonomy" id="93061"/>
    <lineage>
        <taxon>Bacteria</taxon>
        <taxon>Bacillati</taxon>
        <taxon>Bacillota</taxon>
        <taxon>Bacilli</taxon>
        <taxon>Bacillales</taxon>
        <taxon>Staphylococcaceae</taxon>
        <taxon>Staphylococcus</taxon>
    </lineage>
</organism>
<evidence type="ECO:0000255" key="1">
    <source>
        <dbReference type="HAMAP-Rule" id="MF_00097"/>
    </source>
</evidence>
<keyword id="KW-0460">Magnesium</keyword>
<keyword id="KW-0479">Metal-binding</keyword>
<keyword id="KW-1185">Reference proteome</keyword>
<keyword id="KW-0784">Thiamine biosynthesis</keyword>
<keyword id="KW-0808">Transferase</keyword>
<protein>
    <recommendedName>
        <fullName evidence="1">Thiamine-phosphate synthase</fullName>
        <shortName evidence="1">TP synthase</shortName>
        <shortName evidence="1">TPS</shortName>
        <ecNumber evidence="1">2.5.1.3</ecNumber>
    </recommendedName>
    <alternativeName>
        <fullName evidence="1">Thiamine-phosphate pyrophosphorylase</fullName>
        <shortName evidence="1">TMP pyrophosphorylase</shortName>
        <shortName evidence="1">TMP-PPase</shortName>
    </alternativeName>
</protein>
<sequence>MFNQSYLNVYFICGTSDVPSHRTIHEVLEAALKAGITLFQFREKGESALKGNDKLVLAKELQHLCHQYDVPFIVNDDVSLAKEINADGIHVGQDDAKVKEIAQYFTDKIIGLSISDLDEYAKSDLTHVDYIGVGPIYPTPSKHDAHIPVGPEMIATFKEMNPQLPIVAIGGINTNNVAPIVEAGANGISVISAISKSENIEKTVNRFKDFFNN</sequence>
<feature type="chain" id="PRO_1000008176" description="Thiamine-phosphate synthase">
    <location>
        <begin position="1"/>
        <end position="213"/>
    </location>
</feature>
<feature type="binding site" evidence="1">
    <location>
        <begin position="40"/>
        <end position="44"/>
    </location>
    <ligand>
        <name>4-amino-2-methyl-5-(diphosphooxymethyl)pyrimidine</name>
        <dbReference type="ChEBI" id="CHEBI:57841"/>
    </ligand>
</feature>
<feature type="binding site" evidence="1">
    <location>
        <position position="75"/>
    </location>
    <ligand>
        <name>4-amino-2-methyl-5-(diphosphooxymethyl)pyrimidine</name>
        <dbReference type="ChEBI" id="CHEBI:57841"/>
    </ligand>
</feature>
<feature type="binding site" evidence="1">
    <location>
        <position position="76"/>
    </location>
    <ligand>
        <name>Mg(2+)</name>
        <dbReference type="ChEBI" id="CHEBI:18420"/>
    </ligand>
</feature>
<feature type="binding site" evidence="1">
    <location>
        <position position="95"/>
    </location>
    <ligand>
        <name>Mg(2+)</name>
        <dbReference type="ChEBI" id="CHEBI:18420"/>
    </ligand>
</feature>
<feature type="binding site" evidence="1">
    <location>
        <position position="113"/>
    </location>
    <ligand>
        <name>4-amino-2-methyl-5-(diphosphooxymethyl)pyrimidine</name>
        <dbReference type="ChEBI" id="CHEBI:57841"/>
    </ligand>
</feature>
<feature type="binding site" evidence="1">
    <location>
        <begin position="139"/>
        <end position="141"/>
    </location>
    <ligand>
        <name>2-[(2R,5Z)-2-carboxy-4-methylthiazol-5(2H)-ylidene]ethyl phosphate</name>
        <dbReference type="ChEBI" id="CHEBI:62899"/>
    </ligand>
</feature>
<feature type="binding site" evidence="1">
    <location>
        <position position="142"/>
    </location>
    <ligand>
        <name>4-amino-2-methyl-5-(diphosphooxymethyl)pyrimidine</name>
        <dbReference type="ChEBI" id="CHEBI:57841"/>
    </ligand>
</feature>
<feature type="binding site" evidence="1">
    <location>
        <position position="171"/>
    </location>
    <ligand>
        <name>2-[(2R,5Z)-2-carboxy-4-methylthiazol-5(2H)-ylidene]ethyl phosphate</name>
        <dbReference type="ChEBI" id="CHEBI:62899"/>
    </ligand>
</feature>
<feature type="binding site" evidence="1">
    <location>
        <begin position="191"/>
        <end position="192"/>
    </location>
    <ligand>
        <name>2-[(2R,5Z)-2-carboxy-4-methylthiazol-5(2H)-ylidene]ethyl phosphate</name>
        <dbReference type="ChEBI" id="CHEBI:62899"/>
    </ligand>
</feature>